<reference key="1">
    <citation type="submission" date="2007-10" db="EMBL/GenBank/DDBJ databases">
        <title>Complete sequence of Shewanella pealeana ATCC 700345.</title>
        <authorList>
            <consortium name="US DOE Joint Genome Institute"/>
            <person name="Copeland A."/>
            <person name="Lucas S."/>
            <person name="Lapidus A."/>
            <person name="Barry K."/>
            <person name="Glavina del Rio T."/>
            <person name="Dalin E."/>
            <person name="Tice H."/>
            <person name="Pitluck S."/>
            <person name="Chertkov O."/>
            <person name="Brettin T."/>
            <person name="Bruce D."/>
            <person name="Detter J.C."/>
            <person name="Han C."/>
            <person name="Schmutz J."/>
            <person name="Larimer F."/>
            <person name="Land M."/>
            <person name="Hauser L."/>
            <person name="Kyrpides N."/>
            <person name="Kim E."/>
            <person name="Zhao J.-S.Z."/>
            <person name="Manno D."/>
            <person name="Hawari J."/>
            <person name="Richardson P."/>
        </authorList>
    </citation>
    <scope>NUCLEOTIDE SEQUENCE [LARGE SCALE GENOMIC DNA]</scope>
    <source>
        <strain>ATCC 700345 / ANG-SQ1</strain>
    </source>
</reference>
<keyword id="KW-0378">Hydrolase</keyword>
<keyword id="KW-0479">Metal-binding</keyword>
<keyword id="KW-1185">Reference proteome</keyword>
<keyword id="KW-0862">Zinc</keyword>
<comment type="cofactor">
    <cofactor evidence="1">
        <name>Zn(2+)</name>
        <dbReference type="ChEBI" id="CHEBI:29105"/>
    </cofactor>
    <text evidence="1">Binds 3 Zn(2+) ions per subunit.</text>
</comment>
<comment type="similarity">
    <text evidence="1">Belongs to the PHP family.</text>
</comment>
<comment type="sequence caution" evidence="2">
    <conflict type="erroneous initiation">
        <sequence resource="EMBL-CDS" id="ABV86761"/>
    </conflict>
</comment>
<gene>
    <name type="ordered locus">Spea_1436</name>
</gene>
<dbReference type="EC" id="3.1.3.-" evidence="1"/>
<dbReference type="EMBL" id="CP000851">
    <property type="protein sequence ID" value="ABV86761.1"/>
    <property type="status" value="ALT_INIT"/>
    <property type="molecule type" value="Genomic_DNA"/>
</dbReference>
<dbReference type="RefSeq" id="WP_041410879.1">
    <property type="nucleotide sequence ID" value="NC_009901.1"/>
</dbReference>
<dbReference type="SMR" id="A8H2H4"/>
<dbReference type="STRING" id="398579.Spea_1436"/>
<dbReference type="KEGG" id="spl:Spea_1436"/>
<dbReference type="eggNOG" id="COG1387">
    <property type="taxonomic scope" value="Bacteria"/>
</dbReference>
<dbReference type="HOGENOM" id="CLU_061999_0_1_6"/>
<dbReference type="OrthoDB" id="9808747at2"/>
<dbReference type="Proteomes" id="UP000002608">
    <property type="component" value="Chromosome"/>
</dbReference>
<dbReference type="GO" id="GO:0005829">
    <property type="term" value="C:cytosol"/>
    <property type="evidence" value="ECO:0007669"/>
    <property type="project" value="TreeGrafter"/>
</dbReference>
<dbReference type="GO" id="GO:0016791">
    <property type="term" value="F:phosphatase activity"/>
    <property type="evidence" value="ECO:0007669"/>
    <property type="project" value="UniProtKB-UniRule"/>
</dbReference>
<dbReference type="GO" id="GO:0008270">
    <property type="term" value="F:zinc ion binding"/>
    <property type="evidence" value="ECO:0007669"/>
    <property type="project" value="UniProtKB-UniRule"/>
</dbReference>
<dbReference type="GO" id="GO:0071978">
    <property type="term" value="P:bacterial-type flagellum-dependent swarming motility"/>
    <property type="evidence" value="ECO:0007669"/>
    <property type="project" value="TreeGrafter"/>
</dbReference>
<dbReference type="CDD" id="cd07437">
    <property type="entry name" value="PHP_HisPPase_Ycdx_like"/>
    <property type="match status" value="1"/>
</dbReference>
<dbReference type="FunFam" id="3.20.20.140:FF:000008">
    <property type="entry name" value="Probable phosphatase YcdX"/>
    <property type="match status" value="1"/>
</dbReference>
<dbReference type="Gene3D" id="3.20.20.140">
    <property type="entry name" value="Metal-dependent hydrolases"/>
    <property type="match status" value="1"/>
</dbReference>
<dbReference type="HAMAP" id="MF_01561">
    <property type="entry name" value="YcdX_phosphat"/>
    <property type="match status" value="1"/>
</dbReference>
<dbReference type="InterPro" id="IPR023710">
    <property type="entry name" value="Phosphatase_YcdX_put"/>
</dbReference>
<dbReference type="InterPro" id="IPR004013">
    <property type="entry name" value="PHP_dom"/>
</dbReference>
<dbReference type="InterPro" id="IPR050243">
    <property type="entry name" value="PHP_phosphatase"/>
</dbReference>
<dbReference type="InterPro" id="IPR003141">
    <property type="entry name" value="Pol/His_phosphatase_N"/>
</dbReference>
<dbReference type="InterPro" id="IPR016195">
    <property type="entry name" value="Pol/histidinol_Pase-like"/>
</dbReference>
<dbReference type="NCBIfam" id="NF006702">
    <property type="entry name" value="PRK09248.1"/>
    <property type="match status" value="1"/>
</dbReference>
<dbReference type="PANTHER" id="PTHR36928">
    <property type="entry name" value="PHOSPHATASE YCDX-RELATED"/>
    <property type="match status" value="1"/>
</dbReference>
<dbReference type="PANTHER" id="PTHR36928:SF1">
    <property type="entry name" value="PHOSPHATASE YCDX-RELATED"/>
    <property type="match status" value="1"/>
</dbReference>
<dbReference type="Pfam" id="PF02811">
    <property type="entry name" value="PHP"/>
    <property type="match status" value="1"/>
</dbReference>
<dbReference type="SMART" id="SM00481">
    <property type="entry name" value="POLIIIAc"/>
    <property type="match status" value="1"/>
</dbReference>
<dbReference type="SUPFAM" id="SSF89550">
    <property type="entry name" value="PHP domain-like"/>
    <property type="match status" value="1"/>
</dbReference>
<accession>A8H2H4</accession>
<protein>
    <recommendedName>
        <fullName evidence="1">Probable phosphatase Spea_1436</fullName>
        <ecNumber evidence="1">3.1.3.-</ecNumber>
    </recommendedName>
</protein>
<evidence type="ECO:0000255" key="1">
    <source>
        <dbReference type="HAMAP-Rule" id="MF_01561"/>
    </source>
</evidence>
<evidence type="ECO:0000305" key="2"/>
<proteinExistence type="inferred from homology"/>
<name>Y1436_SHEPA</name>
<sequence>MKYLVDTHTHTIASTHAYSTLQEYIAMAKHKGIKLFATTDHGPDMADAPHFWHFVNLRVLPRIVDGVGILRGIEANIKNVVGEIDFFGDYLQELDIVLAGFHEPVFAPSNKETHTAALINCIMSGHVDIITHPGNPAYPIDIAAVAKAAAENNVALEINNSSFLTSRKGSEHNCLAIAKAVKEAGGLLVMGSDSHVAYSLGDFTQAEQIIEQADFPIERLLNRSPEALLAFLSARGHGSLDEYSALLEN</sequence>
<feature type="chain" id="PRO_0000382656" description="Probable phosphatase Spea_1436">
    <location>
        <begin position="1"/>
        <end position="249"/>
    </location>
</feature>
<feature type="binding site" evidence="1">
    <location>
        <position position="8"/>
    </location>
    <ligand>
        <name>Zn(2+)</name>
        <dbReference type="ChEBI" id="CHEBI:29105"/>
        <label>1</label>
    </ligand>
</feature>
<feature type="binding site" evidence="1">
    <location>
        <position position="10"/>
    </location>
    <ligand>
        <name>Zn(2+)</name>
        <dbReference type="ChEBI" id="CHEBI:29105"/>
        <label>1</label>
    </ligand>
</feature>
<feature type="binding site" evidence="1">
    <location>
        <position position="16"/>
    </location>
    <ligand>
        <name>Zn(2+)</name>
        <dbReference type="ChEBI" id="CHEBI:29105"/>
        <label>2</label>
    </ligand>
</feature>
<feature type="binding site" evidence="1">
    <location>
        <position position="41"/>
    </location>
    <ligand>
        <name>Zn(2+)</name>
        <dbReference type="ChEBI" id="CHEBI:29105"/>
        <label>2</label>
    </ligand>
</feature>
<feature type="binding site" evidence="1">
    <location>
        <position position="74"/>
    </location>
    <ligand>
        <name>Zn(2+)</name>
        <dbReference type="ChEBI" id="CHEBI:29105"/>
        <label>1</label>
    </ligand>
</feature>
<feature type="binding site" evidence="1">
    <location>
        <position position="74"/>
    </location>
    <ligand>
        <name>Zn(2+)</name>
        <dbReference type="ChEBI" id="CHEBI:29105"/>
        <label>3</label>
    </ligand>
</feature>
<feature type="binding site" evidence="1">
    <location>
        <position position="102"/>
    </location>
    <ligand>
        <name>Zn(2+)</name>
        <dbReference type="ChEBI" id="CHEBI:29105"/>
        <label>3</label>
    </ligand>
</feature>
<feature type="binding site" evidence="1">
    <location>
        <position position="132"/>
    </location>
    <ligand>
        <name>Zn(2+)</name>
        <dbReference type="ChEBI" id="CHEBI:29105"/>
        <label>3</label>
    </ligand>
</feature>
<feature type="binding site" evidence="1">
    <location>
        <position position="193"/>
    </location>
    <ligand>
        <name>Zn(2+)</name>
        <dbReference type="ChEBI" id="CHEBI:29105"/>
        <label>1</label>
    </ligand>
</feature>
<feature type="binding site" evidence="1">
    <location>
        <position position="195"/>
    </location>
    <ligand>
        <name>Zn(2+)</name>
        <dbReference type="ChEBI" id="CHEBI:29105"/>
        <label>2</label>
    </ligand>
</feature>
<organism>
    <name type="scientific">Shewanella pealeana (strain ATCC 700345 / ANG-SQ1)</name>
    <dbReference type="NCBI Taxonomy" id="398579"/>
    <lineage>
        <taxon>Bacteria</taxon>
        <taxon>Pseudomonadati</taxon>
        <taxon>Pseudomonadota</taxon>
        <taxon>Gammaproteobacteria</taxon>
        <taxon>Alteromonadales</taxon>
        <taxon>Shewanellaceae</taxon>
        <taxon>Shewanella</taxon>
    </lineage>
</organism>